<name>RHAM_ESCF3</name>
<comment type="function">
    <text evidence="1">Involved in the anomeric conversion of L-rhamnose.</text>
</comment>
<comment type="catalytic activity">
    <reaction evidence="1">
        <text>alpha-L-rhamnose = beta-L-rhamnose</text>
        <dbReference type="Rhea" id="RHEA:25584"/>
        <dbReference type="ChEBI" id="CHEBI:27586"/>
        <dbReference type="ChEBI" id="CHEBI:27907"/>
        <dbReference type="EC" id="5.1.3.32"/>
    </reaction>
</comment>
<comment type="pathway">
    <text evidence="1">Carbohydrate metabolism; L-rhamnose metabolism.</text>
</comment>
<comment type="subunit">
    <text evidence="1">Homodimer.</text>
</comment>
<comment type="subcellular location">
    <subcellularLocation>
        <location evidence="1">Cytoplasm</location>
    </subcellularLocation>
</comment>
<comment type="similarity">
    <text evidence="1">Belongs to the rhamnose mutarotase family.</text>
</comment>
<feature type="chain" id="PRO_1000187222" description="L-rhamnose mutarotase">
    <location>
        <begin position="1"/>
        <end position="104"/>
    </location>
</feature>
<feature type="active site" description="Proton donor" evidence="1">
    <location>
        <position position="22"/>
    </location>
</feature>
<feature type="binding site" evidence="1">
    <location>
        <position position="18"/>
    </location>
    <ligand>
        <name>substrate</name>
    </ligand>
</feature>
<feature type="binding site" evidence="1">
    <location>
        <position position="41"/>
    </location>
    <ligand>
        <name>substrate</name>
    </ligand>
</feature>
<feature type="binding site" evidence="1">
    <location>
        <begin position="76"/>
        <end position="77"/>
    </location>
    <ligand>
        <name>substrate</name>
    </ligand>
</feature>
<organism>
    <name type="scientific">Escherichia fergusonii (strain ATCC 35469 / DSM 13698 / CCUG 18766 / IAM 14443 / JCM 21226 / LMG 7866 / NBRC 102419 / NCTC 12128 / CDC 0568-73)</name>
    <dbReference type="NCBI Taxonomy" id="585054"/>
    <lineage>
        <taxon>Bacteria</taxon>
        <taxon>Pseudomonadati</taxon>
        <taxon>Pseudomonadota</taxon>
        <taxon>Gammaproteobacteria</taxon>
        <taxon>Enterobacterales</taxon>
        <taxon>Enterobacteriaceae</taxon>
        <taxon>Escherichia</taxon>
    </lineage>
</organism>
<accession>B7LVE3</accession>
<protein>
    <recommendedName>
        <fullName evidence="1">L-rhamnose mutarotase</fullName>
        <ecNumber evidence="1">5.1.3.32</ecNumber>
    </recommendedName>
    <alternativeName>
        <fullName evidence="1">Rhamnose 1-epimerase</fullName>
    </alternativeName>
    <alternativeName>
        <fullName evidence="1">Type-3 mutarotase</fullName>
    </alternativeName>
</protein>
<dbReference type="EC" id="5.1.3.32" evidence="1"/>
<dbReference type="EMBL" id="CU928158">
    <property type="protein sequence ID" value="CAQ91306.1"/>
    <property type="molecule type" value="Genomic_DNA"/>
</dbReference>
<dbReference type="RefSeq" id="WP_000619485.1">
    <property type="nucleotide sequence ID" value="NC_011740.1"/>
</dbReference>
<dbReference type="SMR" id="B7LVE3"/>
<dbReference type="GeneID" id="75059465"/>
<dbReference type="KEGG" id="efe:EFER_3871"/>
<dbReference type="HOGENOM" id="CLU_100689_2_0_6"/>
<dbReference type="OrthoDB" id="9799608at2"/>
<dbReference type="UniPathway" id="UPA00125"/>
<dbReference type="Proteomes" id="UP000000745">
    <property type="component" value="Chromosome"/>
</dbReference>
<dbReference type="GO" id="GO:0005737">
    <property type="term" value="C:cytoplasm"/>
    <property type="evidence" value="ECO:0007669"/>
    <property type="project" value="UniProtKB-SubCell"/>
</dbReference>
<dbReference type="GO" id="GO:0062192">
    <property type="term" value="F:L-rhamnose mutarotase activity"/>
    <property type="evidence" value="ECO:0007669"/>
    <property type="project" value="UniProtKB-EC"/>
</dbReference>
<dbReference type="GO" id="GO:0019301">
    <property type="term" value="P:rhamnose catabolic process"/>
    <property type="evidence" value="ECO:0007669"/>
    <property type="project" value="TreeGrafter"/>
</dbReference>
<dbReference type="Gene3D" id="3.30.70.100">
    <property type="match status" value="1"/>
</dbReference>
<dbReference type="HAMAP" id="MF_01663">
    <property type="entry name" value="L_rham_rotase"/>
    <property type="match status" value="1"/>
</dbReference>
<dbReference type="InterPro" id="IPR011008">
    <property type="entry name" value="Dimeric_a/b-barrel"/>
</dbReference>
<dbReference type="InterPro" id="IPR013448">
    <property type="entry name" value="L-rhamnose_mutarotase"/>
</dbReference>
<dbReference type="InterPro" id="IPR008000">
    <property type="entry name" value="Rham/fucose_mutarotase"/>
</dbReference>
<dbReference type="NCBIfam" id="TIGR02625">
    <property type="entry name" value="YiiL_rotase"/>
    <property type="match status" value="1"/>
</dbReference>
<dbReference type="PANTHER" id="PTHR34389">
    <property type="entry name" value="L-RHAMNOSE MUTAROTASE"/>
    <property type="match status" value="1"/>
</dbReference>
<dbReference type="PANTHER" id="PTHR34389:SF2">
    <property type="entry name" value="L-RHAMNOSE MUTAROTASE"/>
    <property type="match status" value="1"/>
</dbReference>
<dbReference type="Pfam" id="PF05336">
    <property type="entry name" value="rhaM"/>
    <property type="match status" value="1"/>
</dbReference>
<dbReference type="SUPFAM" id="SSF54909">
    <property type="entry name" value="Dimeric alpha+beta barrel"/>
    <property type="match status" value="1"/>
</dbReference>
<gene>
    <name evidence="1" type="primary">rhaM</name>
    <name type="ordered locus">EFER_3871</name>
</gene>
<proteinExistence type="inferred from homology"/>
<sequence length="104" mass="12243">MIRKAFVMQVNPDAHEEYQHRHNPIWPELEVVLKSHGAHNYAIYLDKARNLLFATVEIESEERWNAVASTDVCQRWWKYMTDVMPANPNNSPVSSELQEVFYLP</sequence>
<reference key="1">
    <citation type="journal article" date="2009" name="PLoS Genet.">
        <title>Organised genome dynamics in the Escherichia coli species results in highly diverse adaptive paths.</title>
        <authorList>
            <person name="Touchon M."/>
            <person name="Hoede C."/>
            <person name="Tenaillon O."/>
            <person name="Barbe V."/>
            <person name="Baeriswyl S."/>
            <person name="Bidet P."/>
            <person name="Bingen E."/>
            <person name="Bonacorsi S."/>
            <person name="Bouchier C."/>
            <person name="Bouvet O."/>
            <person name="Calteau A."/>
            <person name="Chiapello H."/>
            <person name="Clermont O."/>
            <person name="Cruveiller S."/>
            <person name="Danchin A."/>
            <person name="Diard M."/>
            <person name="Dossat C."/>
            <person name="Karoui M.E."/>
            <person name="Frapy E."/>
            <person name="Garry L."/>
            <person name="Ghigo J.M."/>
            <person name="Gilles A.M."/>
            <person name="Johnson J."/>
            <person name="Le Bouguenec C."/>
            <person name="Lescat M."/>
            <person name="Mangenot S."/>
            <person name="Martinez-Jehanne V."/>
            <person name="Matic I."/>
            <person name="Nassif X."/>
            <person name="Oztas S."/>
            <person name="Petit M.A."/>
            <person name="Pichon C."/>
            <person name="Rouy Z."/>
            <person name="Ruf C.S."/>
            <person name="Schneider D."/>
            <person name="Tourret J."/>
            <person name="Vacherie B."/>
            <person name="Vallenet D."/>
            <person name="Medigue C."/>
            <person name="Rocha E.P.C."/>
            <person name="Denamur E."/>
        </authorList>
    </citation>
    <scope>NUCLEOTIDE SEQUENCE [LARGE SCALE GENOMIC DNA]</scope>
    <source>
        <strain>ATCC 35469 / DSM 13698 / BCRC 15582 / CCUG 18766 / IAM 14443 / JCM 21226 / LMG 7866 / NBRC 102419 / NCTC 12128 / CDC 0568-73</strain>
    </source>
</reference>
<keyword id="KW-0119">Carbohydrate metabolism</keyword>
<keyword id="KW-0963">Cytoplasm</keyword>
<keyword id="KW-0413">Isomerase</keyword>
<keyword id="KW-0684">Rhamnose metabolism</keyword>
<evidence type="ECO:0000255" key="1">
    <source>
        <dbReference type="HAMAP-Rule" id="MF_01663"/>
    </source>
</evidence>